<organism>
    <name type="scientific">Mycobacterium leprae (strain TN)</name>
    <dbReference type="NCBI Taxonomy" id="272631"/>
    <lineage>
        <taxon>Bacteria</taxon>
        <taxon>Bacillati</taxon>
        <taxon>Actinomycetota</taxon>
        <taxon>Actinomycetes</taxon>
        <taxon>Mycobacteriales</taxon>
        <taxon>Mycobacteriaceae</taxon>
        <taxon>Mycobacterium</taxon>
    </lineage>
</organism>
<evidence type="ECO:0000250" key="1">
    <source>
        <dbReference type="UniProtKB" id="P96890"/>
    </source>
</evidence>
<evidence type="ECO:0000255" key="2">
    <source>
        <dbReference type="PROSITE-ProRule" id="PRU00409"/>
    </source>
</evidence>
<evidence type="ECO:0000255" key="3">
    <source>
        <dbReference type="PROSITE-ProRule" id="PRU00969"/>
    </source>
</evidence>
<evidence type="ECO:0000255" key="4">
    <source>
        <dbReference type="PROSITE-ProRule" id="PRU01066"/>
    </source>
</evidence>
<evidence type="ECO:0000256" key="5">
    <source>
        <dbReference type="SAM" id="MobiDB-lite"/>
    </source>
</evidence>
<evidence type="ECO:0000305" key="6"/>
<sequence>MASHASSRIAKVLVANRGEIAVRVIRAARDARLPSVAVYAEPDAEAPHVRLADEAFALGGHTSAESYLDFGKILDAAAKSGANAIHPGYGFLAENADFAQAVIDAGLIWIGPSPQSIRDLGDKVTARHIAARAQAPLVPGTPDPVKNADEVVAFAKEHGVPIAIKAAFGGGGKGMKVARTLEEISELYESAVREATVAFGRGECFVERYLDKPRHVEAQVIADQHGNIVVAGTRDCSLQRRFQKLVEEAPAPFLTDAQRKEIHESAKRICKEAHYYGAGTVEYLVGQDGLISFLEVNTRLQVEHPVTEETTGIDLVLQQFKIANGEKLELIKDPIPCGHAIEFRINGEDAGRNFLPSPGPVSKFHPPTGPGVRLDSGVETGSVIGGQFDSMLAKLIVHGATRQEALARARRALDEFEVEGLATVIPFHRAVVSDPALIGDNNSFSVHTRWIETEWNNTIEPFIDNQPLDEEDTRPQQTVIVEVDGRRLEVSLPADLALANPAGCNPAGVIRKKPKPRKRGGHTGAATSGDAVTAPMQGTVVKVAVAEGQTVMTGDLVVVLEAMKMENPVTAHKDGIITGLAVEAGTAITQGTVLAEIK</sequence>
<name>ACCA3_MYCLE</name>
<dbReference type="EC" id="6.3.4.14" evidence="1"/>
<dbReference type="EMBL" id="X63470">
    <property type="protein sequence ID" value="CAA45070.1"/>
    <property type="molecule type" value="Genomic_DNA"/>
</dbReference>
<dbReference type="EMBL" id="U00012">
    <property type="protein sequence ID" value="AAA85920.1"/>
    <property type="molecule type" value="Genomic_DNA"/>
</dbReference>
<dbReference type="EMBL" id="AL583919">
    <property type="protein sequence ID" value="CAC30235.1"/>
    <property type="molecule type" value="Genomic_DNA"/>
</dbReference>
<dbReference type="PIR" id="A55579">
    <property type="entry name" value="A55579"/>
</dbReference>
<dbReference type="PIR" id="G86999">
    <property type="entry name" value="G86999"/>
</dbReference>
<dbReference type="RefSeq" id="NP_301567.1">
    <property type="nucleotide sequence ID" value="NC_002677.1"/>
</dbReference>
<dbReference type="RefSeq" id="WP_010907891.1">
    <property type="nucleotide sequence ID" value="NC_002677.1"/>
</dbReference>
<dbReference type="SMR" id="P46392"/>
<dbReference type="STRING" id="272631.gene:17574550"/>
<dbReference type="KEGG" id="mle:ML0726"/>
<dbReference type="PATRIC" id="fig|272631.5.peg.1321"/>
<dbReference type="Leproma" id="ML0726"/>
<dbReference type="eggNOG" id="COG4770">
    <property type="taxonomic scope" value="Bacteria"/>
</dbReference>
<dbReference type="HOGENOM" id="CLU_000395_3_6_11"/>
<dbReference type="OrthoDB" id="9760256at2"/>
<dbReference type="UniPathway" id="UPA00094"/>
<dbReference type="UniPathway" id="UPA00915"/>
<dbReference type="Proteomes" id="UP000000806">
    <property type="component" value="Chromosome"/>
</dbReference>
<dbReference type="GO" id="GO:0005524">
    <property type="term" value="F:ATP binding"/>
    <property type="evidence" value="ECO:0007669"/>
    <property type="project" value="UniProtKB-KW"/>
</dbReference>
<dbReference type="GO" id="GO:0004075">
    <property type="term" value="F:biotin carboxylase activity"/>
    <property type="evidence" value="ECO:0007669"/>
    <property type="project" value="UniProtKB-EC"/>
</dbReference>
<dbReference type="GO" id="GO:0046872">
    <property type="term" value="F:metal ion binding"/>
    <property type="evidence" value="ECO:0007669"/>
    <property type="project" value="UniProtKB-KW"/>
</dbReference>
<dbReference type="GO" id="GO:0006633">
    <property type="term" value="P:fatty acid biosynthetic process"/>
    <property type="evidence" value="ECO:0007669"/>
    <property type="project" value="UniProtKB-UniPathway"/>
</dbReference>
<dbReference type="CDD" id="cd06850">
    <property type="entry name" value="biotinyl_domain"/>
    <property type="match status" value="1"/>
</dbReference>
<dbReference type="FunFam" id="3.30.470.20:FF:000053">
    <property type="entry name" value="Acetyl-/propionyl-coenzyme A carboxylase alpha chain"/>
    <property type="match status" value="1"/>
</dbReference>
<dbReference type="FunFam" id="2.40.50.100:FF:000003">
    <property type="entry name" value="Acetyl-CoA carboxylase biotin carboxyl carrier protein"/>
    <property type="match status" value="1"/>
</dbReference>
<dbReference type="FunFam" id="3.30.1490.20:FF:000003">
    <property type="entry name" value="acetyl-CoA carboxylase isoform X1"/>
    <property type="match status" value="1"/>
</dbReference>
<dbReference type="FunFam" id="3.40.50.20:FF:000010">
    <property type="entry name" value="Propionyl-CoA carboxylase subunit alpha"/>
    <property type="match status" value="1"/>
</dbReference>
<dbReference type="Gene3D" id="2.40.50.100">
    <property type="match status" value="1"/>
</dbReference>
<dbReference type="Gene3D" id="3.40.50.20">
    <property type="match status" value="1"/>
</dbReference>
<dbReference type="Gene3D" id="3.30.1490.20">
    <property type="entry name" value="ATP-grasp fold, A domain"/>
    <property type="match status" value="1"/>
</dbReference>
<dbReference type="Gene3D" id="3.30.470.20">
    <property type="entry name" value="ATP-grasp fold, B domain"/>
    <property type="match status" value="1"/>
</dbReference>
<dbReference type="InterPro" id="IPR011761">
    <property type="entry name" value="ATP-grasp"/>
</dbReference>
<dbReference type="InterPro" id="IPR013815">
    <property type="entry name" value="ATP_grasp_subdomain_1"/>
</dbReference>
<dbReference type="InterPro" id="IPR005481">
    <property type="entry name" value="BC-like_N"/>
</dbReference>
<dbReference type="InterPro" id="IPR001882">
    <property type="entry name" value="Biotin_BS"/>
</dbReference>
<dbReference type="InterPro" id="IPR050856">
    <property type="entry name" value="Biotin_carboxylase_complex"/>
</dbReference>
<dbReference type="InterPro" id="IPR011764">
    <property type="entry name" value="Biotin_carboxylation_dom"/>
</dbReference>
<dbReference type="InterPro" id="IPR005482">
    <property type="entry name" value="Biotin_COase_C"/>
</dbReference>
<dbReference type="InterPro" id="IPR000089">
    <property type="entry name" value="Biotin_lipoyl"/>
</dbReference>
<dbReference type="InterPro" id="IPR005479">
    <property type="entry name" value="CbamoylP_synth_lsu-like_ATP-bd"/>
</dbReference>
<dbReference type="InterPro" id="IPR016185">
    <property type="entry name" value="PreATP-grasp_dom_sf"/>
</dbReference>
<dbReference type="InterPro" id="IPR011054">
    <property type="entry name" value="Rudment_hybrid_motif"/>
</dbReference>
<dbReference type="InterPro" id="IPR011053">
    <property type="entry name" value="Single_hybrid_motif"/>
</dbReference>
<dbReference type="PANTHER" id="PTHR18866">
    <property type="entry name" value="CARBOXYLASE:PYRUVATE/ACETYL-COA/PROPIONYL-COA CARBOXYLASE"/>
    <property type="match status" value="1"/>
</dbReference>
<dbReference type="PANTHER" id="PTHR18866:SF33">
    <property type="entry name" value="METHYLCROTONOYL-COA CARBOXYLASE SUBUNIT ALPHA, MITOCHONDRIAL-RELATED"/>
    <property type="match status" value="1"/>
</dbReference>
<dbReference type="Pfam" id="PF02785">
    <property type="entry name" value="Biotin_carb_C"/>
    <property type="match status" value="1"/>
</dbReference>
<dbReference type="Pfam" id="PF00289">
    <property type="entry name" value="Biotin_carb_N"/>
    <property type="match status" value="1"/>
</dbReference>
<dbReference type="Pfam" id="PF00364">
    <property type="entry name" value="Biotin_lipoyl"/>
    <property type="match status" value="1"/>
</dbReference>
<dbReference type="Pfam" id="PF02786">
    <property type="entry name" value="CPSase_L_D2"/>
    <property type="match status" value="1"/>
</dbReference>
<dbReference type="SMART" id="SM00878">
    <property type="entry name" value="Biotin_carb_C"/>
    <property type="match status" value="1"/>
</dbReference>
<dbReference type="SUPFAM" id="SSF56059">
    <property type="entry name" value="Glutathione synthetase ATP-binding domain-like"/>
    <property type="match status" value="1"/>
</dbReference>
<dbReference type="SUPFAM" id="SSF52440">
    <property type="entry name" value="PreATP-grasp domain"/>
    <property type="match status" value="1"/>
</dbReference>
<dbReference type="SUPFAM" id="SSF51246">
    <property type="entry name" value="Rudiment single hybrid motif"/>
    <property type="match status" value="1"/>
</dbReference>
<dbReference type="SUPFAM" id="SSF51230">
    <property type="entry name" value="Single hybrid motif"/>
    <property type="match status" value="1"/>
</dbReference>
<dbReference type="PROSITE" id="PS50975">
    <property type="entry name" value="ATP_GRASP"/>
    <property type="match status" value="1"/>
</dbReference>
<dbReference type="PROSITE" id="PS50979">
    <property type="entry name" value="BC"/>
    <property type="match status" value="1"/>
</dbReference>
<dbReference type="PROSITE" id="PS00188">
    <property type="entry name" value="BIOTIN"/>
    <property type="match status" value="1"/>
</dbReference>
<dbReference type="PROSITE" id="PS50968">
    <property type="entry name" value="BIOTINYL_LIPOYL"/>
    <property type="match status" value="1"/>
</dbReference>
<dbReference type="PROSITE" id="PS00866">
    <property type="entry name" value="CPSASE_1"/>
    <property type="match status" value="1"/>
</dbReference>
<dbReference type="PROSITE" id="PS00867">
    <property type="entry name" value="CPSASE_2"/>
    <property type="match status" value="1"/>
</dbReference>
<proteinExistence type="inferred from homology"/>
<protein>
    <recommendedName>
        <fullName evidence="1">Biotin-dependent acyl-coenzyme A carboxylase alpha3 subunit</fullName>
    </recommendedName>
    <domain>
        <recommendedName>
            <fullName evidence="1">Biotin carboxylase</fullName>
            <shortName evidence="1">BC</shortName>
            <ecNumber evidence="1">6.3.4.14</ecNumber>
        </recommendedName>
    </domain>
    <domain>
        <recommendedName>
            <fullName evidence="1">Biotin carboxyl carrier protein</fullName>
            <shortName evidence="1">BCCP</shortName>
        </recommendedName>
    </domain>
</protein>
<accession>P46392</accession>
<gene>
    <name type="primary">bccA</name>
    <name type="ordered locus">ML0726</name>
    <name type="ORF">B1308_C1_129</name>
</gene>
<comment type="function">
    <text evidence="1">Component of a biotin-dependent acyl-CoA carboxylase complex. This subunit catalyzes the ATP-dependent carboxylation of the biotin carried by the biotin carboxyl carrier (BCC) domain, resulting in the formation of carboxyl biotin.</text>
</comment>
<comment type="catalytic activity">
    <reaction evidence="1">
        <text>N(6)-biotinyl-L-lysyl-[protein] + hydrogencarbonate + ATP = N(6)-carboxybiotinyl-L-lysyl-[protein] + ADP + phosphate + H(+)</text>
        <dbReference type="Rhea" id="RHEA:13501"/>
        <dbReference type="Rhea" id="RHEA-COMP:10505"/>
        <dbReference type="Rhea" id="RHEA-COMP:10506"/>
        <dbReference type="ChEBI" id="CHEBI:15378"/>
        <dbReference type="ChEBI" id="CHEBI:17544"/>
        <dbReference type="ChEBI" id="CHEBI:30616"/>
        <dbReference type="ChEBI" id="CHEBI:43474"/>
        <dbReference type="ChEBI" id="CHEBI:83144"/>
        <dbReference type="ChEBI" id="CHEBI:83145"/>
        <dbReference type="ChEBI" id="CHEBI:456216"/>
        <dbReference type="EC" id="6.3.4.14"/>
    </reaction>
    <physiologicalReaction direction="left-to-right" evidence="1">
        <dbReference type="Rhea" id="RHEA:13502"/>
    </physiologicalReaction>
</comment>
<comment type="cofactor">
    <cofactor evidence="2">
        <name>Mg(2+)</name>
        <dbReference type="ChEBI" id="CHEBI:18420"/>
    </cofactor>
    <cofactor evidence="2">
        <name>Mn(2+)</name>
        <dbReference type="ChEBI" id="CHEBI:29035"/>
    </cofactor>
    <text evidence="2">Binds 2 magnesium or manganese ions per subunit.</text>
</comment>
<comment type="cofactor">
    <cofactor evidence="4">
        <name>biotin</name>
        <dbReference type="ChEBI" id="CHEBI:57586"/>
    </cofactor>
</comment>
<comment type="pathway">
    <text evidence="1">Lipid metabolism; fatty acid biosynthesis.</text>
</comment>
<comment type="pathway">
    <text evidence="1">Lipid metabolism; mycolic acid biosynthesis.</text>
</comment>
<comment type="subunit">
    <text evidence="1">The biotin-dependent acyl-CoA carboxylase complex is composed of AccA3, which contains the biotin carboxylase (BC) and biotin carboxyl carrier protein (BCCP) domains, and an AccD protein, which contains the carboxyl transferase (CT) domain.</text>
</comment>
<reference key="1">
    <citation type="journal article" date="1994" name="J. Bacteriol.">
        <title>Lipid synthesis in mycobacteria: characterization of the biotin carboxyl carrier protein genes from Mycobacterium leprae and M. tuberculosis.</title>
        <authorList>
            <person name="Norman E."/>
            <person name="de Smet K.A.L."/>
            <person name="Stoker N.G."/>
            <person name="Ratledge C."/>
            <person name="Wheeler P.R."/>
            <person name="Dale J.W."/>
        </authorList>
    </citation>
    <scope>NUCLEOTIDE SEQUENCE [GENOMIC DNA]</scope>
</reference>
<reference key="2">
    <citation type="submission" date="1994-03" db="EMBL/GenBank/DDBJ databases">
        <authorList>
            <person name="Smith D.R."/>
            <person name="Robison K."/>
        </authorList>
    </citation>
    <scope>NUCLEOTIDE SEQUENCE [GENOMIC DNA]</scope>
</reference>
<reference key="3">
    <citation type="journal article" date="2001" name="Nature">
        <title>Massive gene decay in the leprosy bacillus.</title>
        <authorList>
            <person name="Cole S.T."/>
            <person name="Eiglmeier K."/>
            <person name="Parkhill J."/>
            <person name="James K.D."/>
            <person name="Thomson N.R."/>
            <person name="Wheeler P.R."/>
            <person name="Honore N."/>
            <person name="Garnier T."/>
            <person name="Churcher C.M."/>
            <person name="Harris D.E."/>
            <person name="Mungall K.L."/>
            <person name="Basham D."/>
            <person name="Brown D."/>
            <person name="Chillingworth T."/>
            <person name="Connor R."/>
            <person name="Davies R.M."/>
            <person name="Devlin K."/>
            <person name="Duthoy S."/>
            <person name="Feltwell T."/>
            <person name="Fraser A."/>
            <person name="Hamlin N."/>
            <person name="Holroyd S."/>
            <person name="Hornsby T."/>
            <person name="Jagels K."/>
            <person name="Lacroix C."/>
            <person name="Maclean J."/>
            <person name="Moule S."/>
            <person name="Murphy L.D."/>
            <person name="Oliver K."/>
            <person name="Quail M.A."/>
            <person name="Rajandream M.A."/>
            <person name="Rutherford K.M."/>
            <person name="Rutter S."/>
            <person name="Seeger K."/>
            <person name="Simon S."/>
            <person name="Simmonds M."/>
            <person name="Skelton J."/>
            <person name="Squares R."/>
            <person name="Squares S."/>
            <person name="Stevens K."/>
            <person name="Taylor K."/>
            <person name="Whitehead S."/>
            <person name="Woodward J.R."/>
            <person name="Barrell B.G."/>
        </authorList>
    </citation>
    <scope>NUCLEOTIDE SEQUENCE [LARGE SCALE GENOMIC DNA]</scope>
    <source>
        <strain>TN</strain>
    </source>
</reference>
<keyword id="KW-0067">ATP-binding</keyword>
<keyword id="KW-0092">Biotin</keyword>
<keyword id="KW-0275">Fatty acid biosynthesis</keyword>
<keyword id="KW-0276">Fatty acid metabolism</keyword>
<keyword id="KW-0436">Ligase</keyword>
<keyword id="KW-0444">Lipid biosynthesis</keyword>
<keyword id="KW-0443">Lipid metabolism</keyword>
<keyword id="KW-0460">Magnesium</keyword>
<keyword id="KW-0464">Manganese</keyword>
<keyword id="KW-0479">Metal-binding</keyword>
<keyword id="KW-0547">Nucleotide-binding</keyword>
<keyword id="KW-1185">Reference proteome</keyword>
<feature type="chain" id="PRO_0000146797" description="Biotin-dependent acyl-coenzyme A carboxylase alpha3 subunit">
    <location>
        <begin position="1"/>
        <end position="598"/>
    </location>
</feature>
<feature type="domain" description="Biotin carboxylation" evidence="3">
    <location>
        <begin position="8"/>
        <end position="452"/>
    </location>
</feature>
<feature type="domain" description="ATP-grasp" evidence="2">
    <location>
        <begin position="127"/>
        <end position="324"/>
    </location>
</feature>
<feature type="domain" description="Biotinyl-binding" evidence="4">
    <location>
        <begin position="522"/>
        <end position="598"/>
    </location>
</feature>
<feature type="region of interest" description="Disordered" evidence="5">
    <location>
        <begin position="506"/>
        <end position="531"/>
    </location>
</feature>
<feature type="compositionally biased region" description="Basic residues" evidence="5">
    <location>
        <begin position="510"/>
        <end position="521"/>
    </location>
</feature>
<feature type="binding site" evidence="2">
    <location>
        <begin position="155"/>
        <end position="216"/>
    </location>
    <ligand>
        <name>ATP</name>
        <dbReference type="ChEBI" id="CHEBI:30616"/>
    </ligand>
</feature>
<feature type="binding site" evidence="2">
    <location>
        <position position="282"/>
    </location>
    <ligand>
        <name>Mg(2+)</name>
        <dbReference type="ChEBI" id="CHEBI:18420"/>
        <label>1</label>
    </ligand>
</feature>
<feature type="binding site" evidence="2">
    <location>
        <position position="282"/>
    </location>
    <ligand>
        <name>Mn(2+)</name>
        <dbReference type="ChEBI" id="CHEBI:29035"/>
        <label>1</label>
    </ligand>
</feature>
<feature type="binding site" evidence="2">
    <location>
        <position position="295"/>
    </location>
    <ligand>
        <name>Mg(2+)</name>
        <dbReference type="ChEBI" id="CHEBI:18420"/>
        <label>1</label>
    </ligand>
</feature>
<feature type="binding site" evidence="2">
    <location>
        <position position="295"/>
    </location>
    <ligand>
        <name>Mg(2+)</name>
        <dbReference type="ChEBI" id="CHEBI:18420"/>
        <label>2</label>
    </ligand>
</feature>
<feature type="binding site" evidence="2">
    <location>
        <position position="295"/>
    </location>
    <ligand>
        <name>Mn(2+)</name>
        <dbReference type="ChEBI" id="CHEBI:29035"/>
        <label>1</label>
    </ligand>
</feature>
<feature type="binding site" evidence="2">
    <location>
        <position position="295"/>
    </location>
    <ligand>
        <name>Mn(2+)</name>
        <dbReference type="ChEBI" id="CHEBI:29035"/>
        <label>2</label>
    </ligand>
</feature>
<feature type="binding site" evidence="2">
    <location>
        <position position="297"/>
    </location>
    <ligand>
        <name>Mg(2+)</name>
        <dbReference type="ChEBI" id="CHEBI:18420"/>
        <label>2</label>
    </ligand>
</feature>
<feature type="binding site" evidence="2">
    <location>
        <position position="297"/>
    </location>
    <ligand>
        <name>Mn(2+)</name>
        <dbReference type="ChEBI" id="CHEBI:29035"/>
        <label>2</label>
    </ligand>
</feature>
<feature type="modified residue" description="N6-biotinyllysine" evidence="4">
    <location>
        <position position="564"/>
    </location>
</feature>
<feature type="sequence conflict" description="In Ref. 1; CAA45070." evidence="6" ref="1">
    <original>D</original>
    <variation>H</variation>
    <location>
        <position position="30"/>
    </location>
</feature>